<name>LPXC_ACTPJ</name>
<dbReference type="EC" id="3.5.1.108" evidence="1"/>
<dbReference type="EMBL" id="CP000687">
    <property type="protein sequence ID" value="ABY68631.1"/>
    <property type="molecule type" value="Genomic_DNA"/>
</dbReference>
<dbReference type="RefSeq" id="WP_005603044.1">
    <property type="nucleotide sequence ID" value="NC_010278.1"/>
</dbReference>
<dbReference type="SMR" id="B0BRI3"/>
<dbReference type="KEGG" id="apj:APJL_0025"/>
<dbReference type="HOGENOM" id="CLU_046528_1_0_6"/>
<dbReference type="UniPathway" id="UPA00359">
    <property type="reaction ID" value="UER00478"/>
</dbReference>
<dbReference type="Proteomes" id="UP000008547">
    <property type="component" value="Chromosome"/>
</dbReference>
<dbReference type="GO" id="GO:0016020">
    <property type="term" value="C:membrane"/>
    <property type="evidence" value="ECO:0007669"/>
    <property type="project" value="GOC"/>
</dbReference>
<dbReference type="GO" id="GO:0046872">
    <property type="term" value="F:metal ion binding"/>
    <property type="evidence" value="ECO:0007669"/>
    <property type="project" value="UniProtKB-KW"/>
</dbReference>
<dbReference type="GO" id="GO:0103117">
    <property type="term" value="F:UDP-3-O-acyl-N-acetylglucosamine deacetylase activity"/>
    <property type="evidence" value="ECO:0007669"/>
    <property type="project" value="UniProtKB-UniRule"/>
</dbReference>
<dbReference type="GO" id="GO:0009245">
    <property type="term" value="P:lipid A biosynthetic process"/>
    <property type="evidence" value="ECO:0007669"/>
    <property type="project" value="UniProtKB-UniRule"/>
</dbReference>
<dbReference type="Gene3D" id="3.30.230.20">
    <property type="entry name" value="lpxc deacetylase, domain 1"/>
    <property type="match status" value="1"/>
</dbReference>
<dbReference type="Gene3D" id="3.30.1700.10">
    <property type="entry name" value="lpxc deacetylase, domain 2"/>
    <property type="match status" value="1"/>
</dbReference>
<dbReference type="HAMAP" id="MF_00388">
    <property type="entry name" value="LpxC"/>
    <property type="match status" value="1"/>
</dbReference>
<dbReference type="InterPro" id="IPR020568">
    <property type="entry name" value="Ribosomal_Su5_D2-typ_SF"/>
</dbReference>
<dbReference type="InterPro" id="IPR004463">
    <property type="entry name" value="UDP-acyl_GlcNac_deAcase"/>
</dbReference>
<dbReference type="InterPro" id="IPR011334">
    <property type="entry name" value="UDP-acyl_GlcNac_deAcase_C"/>
</dbReference>
<dbReference type="InterPro" id="IPR015870">
    <property type="entry name" value="UDP-acyl_N-AcGlcN_deAcase_N"/>
</dbReference>
<dbReference type="NCBIfam" id="TIGR00325">
    <property type="entry name" value="lpxC"/>
    <property type="match status" value="1"/>
</dbReference>
<dbReference type="PANTHER" id="PTHR33694">
    <property type="entry name" value="UDP-3-O-ACYL-N-ACETYLGLUCOSAMINE DEACETYLASE 1, MITOCHONDRIAL-RELATED"/>
    <property type="match status" value="1"/>
</dbReference>
<dbReference type="PANTHER" id="PTHR33694:SF1">
    <property type="entry name" value="UDP-3-O-ACYL-N-ACETYLGLUCOSAMINE DEACETYLASE 1, MITOCHONDRIAL-RELATED"/>
    <property type="match status" value="1"/>
</dbReference>
<dbReference type="Pfam" id="PF03331">
    <property type="entry name" value="LpxC"/>
    <property type="match status" value="1"/>
</dbReference>
<dbReference type="SUPFAM" id="SSF54211">
    <property type="entry name" value="Ribosomal protein S5 domain 2-like"/>
    <property type="match status" value="2"/>
</dbReference>
<gene>
    <name evidence="1" type="primary">lpxC</name>
    <name type="ordered locus">APJL_0025</name>
</gene>
<protein>
    <recommendedName>
        <fullName evidence="1">UDP-3-O-acyl-N-acetylglucosamine deacetylase</fullName>
        <shortName evidence="1">UDP-3-O-acyl-GlcNAc deacetylase</shortName>
        <ecNumber evidence="1">3.5.1.108</ecNumber>
    </recommendedName>
    <alternativeName>
        <fullName evidence="1">UDP-3-O-[R-3-hydroxymyristoyl]-N-acetylglucosamine deacetylase</fullName>
    </alternativeName>
</protein>
<accession>B0BRI3</accession>
<reference key="1">
    <citation type="journal article" date="2008" name="PLoS ONE">
        <title>Genome biology of Actinobacillus pleuropneumoniae JL03, an isolate of serotype 3 prevalent in China.</title>
        <authorList>
            <person name="Xu Z."/>
            <person name="Zhou Y."/>
            <person name="Li L."/>
            <person name="Zhou R."/>
            <person name="Xiao S."/>
            <person name="Wan Y."/>
            <person name="Zhang S."/>
            <person name="Wang K."/>
            <person name="Li W."/>
            <person name="Li L."/>
            <person name="Jin H."/>
            <person name="Kang M."/>
            <person name="Dalai B."/>
            <person name="Li T."/>
            <person name="Liu L."/>
            <person name="Cheng Y."/>
            <person name="Zhang L."/>
            <person name="Xu T."/>
            <person name="Zheng H."/>
            <person name="Pu S."/>
            <person name="Wang B."/>
            <person name="Gu W."/>
            <person name="Zhang X.L."/>
            <person name="Zhu G.-F."/>
            <person name="Wang S."/>
            <person name="Zhao G.-P."/>
            <person name="Chen H."/>
        </authorList>
    </citation>
    <scope>NUCLEOTIDE SEQUENCE [LARGE SCALE GENOMIC DNA]</scope>
    <source>
        <strain>JL03</strain>
    </source>
</reference>
<sequence length="306" mass="34349">MIKQRTLKQATKVTGIGLHSGKKVTLTLRPAPANTGIVYARTDLEPAVYFPASAESIRDTQLCTCMINDDGVRISTVEHLNAAMASLGLDNLIVEVDAPEIPIMDGSASPFIYLLLDAGIEEQDAPKKFIRIRETVRVEEGDKWAEMKPYSKGLKLDFTIDFSHPMISKDVRNFKMELSAENFIHKISRARTFTFMKDVEYLQSIGLALGGSLDNAIVLDKYRILNEEGLRYKDELVKHKMLDSIGDLFMCGYNILGDFSAYKSGHGLNNKLLRAILANENAWEFVTFEDKEQAPEGYRIGEQVFI</sequence>
<evidence type="ECO:0000255" key="1">
    <source>
        <dbReference type="HAMAP-Rule" id="MF_00388"/>
    </source>
</evidence>
<organism>
    <name type="scientific">Actinobacillus pleuropneumoniae serotype 3 (strain JL03)</name>
    <dbReference type="NCBI Taxonomy" id="434271"/>
    <lineage>
        <taxon>Bacteria</taxon>
        <taxon>Pseudomonadati</taxon>
        <taxon>Pseudomonadota</taxon>
        <taxon>Gammaproteobacteria</taxon>
        <taxon>Pasteurellales</taxon>
        <taxon>Pasteurellaceae</taxon>
        <taxon>Actinobacillus</taxon>
    </lineage>
</organism>
<keyword id="KW-0378">Hydrolase</keyword>
<keyword id="KW-0441">Lipid A biosynthesis</keyword>
<keyword id="KW-0444">Lipid biosynthesis</keyword>
<keyword id="KW-0443">Lipid metabolism</keyword>
<keyword id="KW-0479">Metal-binding</keyword>
<keyword id="KW-0862">Zinc</keyword>
<feature type="chain" id="PRO_1000190882" description="UDP-3-O-acyl-N-acetylglucosamine deacetylase">
    <location>
        <begin position="1"/>
        <end position="306"/>
    </location>
</feature>
<feature type="active site" description="Proton donor" evidence="1">
    <location>
        <position position="266"/>
    </location>
</feature>
<feature type="binding site" evidence="1">
    <location>
        <position position="79"/>
    </location>
    <ligand>
        <name>Zn(2+)</name>
        <dbReference type="ChEBI" id="CHEBI:29105"/>
    </ligand>
</feature>
<feature type="binding site" evidence="1">
    <location>
        <position position="239"/>
    </location>
    <ligand>
        <name>Zn(2+)</name>
        <dbReference type="ChEBI" id="CHEBI:29105"/>
    </ligand>
</feature>
<feature type="binding site" evidence="1">
    <location>
        <position position="243"/>
    </location>
    <ligand>
        <name>Zn(2+)</name>
        <dbReference type="ChEBI" id="CHEBI:29105"/>
    </ligand>
</feature>
<proteinExistence type="inferred from homology"/>
<comment type="function">
    <text evidence="1">Catalyzes the hydrolysis of UDP-3-O-myristoyl-N-acetylglucosamine to form UDP-3-O-myristoylglucosamine and acetate, the committed step in lipid A biosynthesis.</text>
</comment>
<comment type="catalytic activity">
    <reaction evidence="1">
        <text>a UDP-3-O-[(3R)-3-hydroxyacyl]-N-acetyl-alpha-D-glucosamine + H2O = a UDP-3-O-[(3R)-3-hydroxyacyl]-alpha-D-glucosamine + acetate</text>
        <dbReference type="Rhea" id="RHEA:67816"/>
        <dbReference type="ChEBI" id="CHEBI:15377"/>
        <dbReference type="ChEBI" id="CHEBI:30089"/>
        <dbReference type="ChEBI" id="CHEBI:137740"/>
        <dbReference type="ChEBI" id="CHEBI:173225"/>
        <dbReference type="EC" id="3.5.1.108"/>
    </reaction>
</comment>
<comment type="cofactor">
    <cofactor evidence="1">
        <name>Zn(2+)</name>
        <dbReference type="ChEBI" id="CHEBI:29105"/>
    </cofactor>
</comment>
<comment type="pathway">
    <text evidence="1">Glycolipid biosynthesis; lipid IV(A) biosynthesis; lipid IV(A) from (3R)-3-hydroxytetradecanoyl-[acyl-carrier-protein] and UDP-N-acetyl-alpha-D-glucosamine: step 2/6.</text>
</comment>
<comment type="similarity">
    <text evidence="1">Belongs to the LpxC family.</text>
</comment>